<feature type="chain" id="PRO_0000160269" description="Uncharacterized protein AN1985">
    <location>
        <begin position="1"/>
        <end position="352"/>
    </location>
</feature>
<feature type="coiled-coil region" evidence="1">
    <location>
        <begin position="285"/>
        <end position="352"/>
    </location>
</feature>
<dbReference type="EMBL" id="AACD01000030">
    <property type="protein sequence ID" value="EAA63886.1"/>
    <property type="status" value="ALT_SEQ"/>
    <property type="molecule type" value="Genomic_DNA"/>
</dbReference>
<dbReference type="EMBL" id="BN001307">
    <property type="protein sequence ID" value="CBF85951.1"/>
    <property type="molecule type" value="Genomic_DNA"/>
</dbReference>
<dbReference type="RefSeq" id="XP_659589.1">
    <property type="nucleotide sequence ID" value="XM_654497.1"/>
</dbReference>
<dbReference type="SMR" id="P0C0V6"/>
<dbReference type="STRING" id="227321.P0C0V6"/>
<dbReference type="EnsemblFungi" id="CBF85951">
    <property type="protein sequence ID" value="CBF85951"/>
    <property type="gene ID" value="ANIA_10254"/>
</dbReference>
<dbReference type="KEGG" id="ani:ANIA_10254"/>
<dbReference type="VEuPathDB" id="FungiDB:AN10254"/>
<dbReference type="eggNOG" id="ENOG502S7PS">
    <property type="taxonomic scope" value="Eukaryota"/>
</dbReference>
<dbReference type="HOGENOM" id="CLU_054584_1_0_1"/>
<dbReference type="InParanoid" id="P0C0V6"/>
<dbReference type="OMA" id="SNLRTWA"/>
<dbReference type="OrthoDB" id="66964at2759"/>
<dbReference type="Proteomes" id="UP000000560">
    <property type="component" value="Chromosome VII"/>
</dbReference>
<accession>P0C0V6</accession>
<accession>C8VL60</accession>
<accession>Q5BBU5</accession>
<reference key="1">
    <citation type="journal article" date="2005" name="Nature">
        <title>Sequencing of Aspergillus nidulans and comparative analysis with A. fumigatus and A. oryzae.</title>
        <authorList>
            <person name="Galagan J.E."/>
            <person name="Calvo S.E."/>
            <person name="Cuomo C."/>
            <person name="Ma L.-J."/>
            <person name="Wortman J.R."/>
            <person name="Batzoglou S."/>
            <person name="Lee S.-I."/>
            <person name="Bastuerkmen M."/>
            <person name="Spevak C.C."/>
            <person name="Clutterbuck J."/>
            <person name="Kapitonov V."/>
            <person name="Jurka J."/>
            <person name="Scazzocchio C."/>
            <person name="Farman M.L."/>
            <person name="Butler J."/>
            <person name="Purcell S."/>
            <person name="Harris S."/>
            <person name="Braus G.H."/>
            <person name="Draht O."/>
            <person name="Busch S."/>
            <person name="D'Enfert C."/>
            <person name="Bouchier C."/>
            <person name="Goldman G.H."/>
            <person name="Bell-Pedersen D."/>
            <person name="Griffiths-Jones S."/>
            <person name="Doonan J.H."/>
            <person name="Yu J."/>
            <person name="Vienken K."/>
            <person name="Pain A."/>
            <person name="Freitag M."/>
            <person name="Selker E.U."/>
            <person name="Archer D.B."/>
            <person name="Penalva M.A."/>
            <person name="Oakley B.R."/>
            <person name="Momany M."/>
            <person name="Tanaka T."/>
            <person name="Kumagai T."/>
            <person name="Asai K."/>
            <person name="Machida M."/>
            <person name="Nierman W.C."/>
            <person name="Denning D.W."/>
            <person name="Caddick M.X."/>
            <person name="Hynes M."/>
            <person name="Paoletti M."/>
            <person name="Fischer R."/>
            <person name="Miller B.L."/>
            <person name="Dyer P.S."/>
            <person name="Sachs M.S."/>
            <person name="Osmani S.A."/>
            <person name="Birren B.W."/>
        </authorList>
    </citation>
    <scope>NUCLEOTIDE SEQUENCE [LARGE SCALE GENOMIC DNA]</scope>
    <source>
        <strain>FGSC A4 / ATCC 38163 / CBS 112.46 / NRRL 194 / M139</strain>
    </source>
</reference>
<reference key="2">
    <citation type="journal article" date="2009" name="Fungal Genet. Biol.">
        <title>The 2008 update of the Aspergillus nidulans genome annotation: a community effort.</title>
        <authorList>
            <person name="Wortman J.R."/>
            <person name="Gilsenan J.M."/>
            <person name="Joardar V."/>
            <person name="Deegan J."/>
            <person name="Clutterbuck J."/>
            <person name="Andersen M.R."/>
            <person name="Archer D."/>
            <person name="Bencina M."/>
            <person name="Braus G."/>
            <person name="Coutinho P."/>
            <person name="von Dohren H."/>
            <person name="Doonan J."/>
            <person name="Driessen A.J."/>
            <person name="Durek P."/>
            <person name="Espeso E."/>
            <person name="Fekete E."/>
            <person name="Flipphi M."/>
            <person name="Estrada C.G."/>
            <person name="Geysens S."/>
            <person name="Goldman G."/>
            <person name="de Groot P.W."/>
            <person name="Hansen K."/>
            <person name="Harris S.D."/>
            <person name="Heinekamp T."/>
            <person name="Helmstaedt K."/>
            <person name="Henrissat B."/>
            <person name="Hofmann G."/>
            <person name="Homan T."/>
            <person name="Horio T."/>
            <person name="Horiuchi H."/>
            <person name="James S."/>
            <person name="Jones M."/>
            <person name="Karaffa L."/>
            <person name="Karanyi Z."/>
            <person name="Kato M."/>
            <person name="Keller N."/>
            <person name="Kelly D.E."/>
            <person name="Kiel J.A."/>
            <person name="Kim J.M."/>
            <person name="van der Klei I.J."/>
            <person name="Klis F.M."/>
            <person name="Kovalchuk A."/>
            <person name="Krasevec N."/>
            <person name="Kubicek C.P."/>
            <person name="Liu B."/>
            <person name="Maccabe A."/>
            <person name="Meyer V."/>
            <person name="Mirabito P."/>
            <person name="Miskei M."/>
            <person name="Mos M."/>
            <person name="Mullins J."/>
            <person name="Nelson D.R."/>
            <person name="Nielsen J."/>
            <person name="Oakley B.R."/>
            <person name="Osmani S.A."/>
            <person name="Pakula T."/>
            <person name="Paszewski A."/>
            <person name="Paulsen I."/>
            <person name="Pilsyk S."/>
            <person name="Pocsi I."/>
            <person name="Punt P.J."/>
            <person name="Ram A.F."/>
            <person name="Ren Q."/>
            <person name="Robellet X."/>
            <person name="Robson G."/>
            <person name="Seiboth B."/>
            <person name="van Solingen P."/>
            <person name="Specht T."/>
            <person name="Sun J."/>
            <person name="Taheri-Talesh N."/>
            <person name="Takeshita N."/>
            <person name="Ussery D."/>
            <person name="vanKuyk P.A."/>
            <person name="Visser H."/>
            <person name="van de Vondervoort P.J."/>
            <person name="de Vries R.P."/>
            <person name="Walton J."/>
            <person name="Xiang X."/>
            <person name="Xiong Y."/>
            <person name="Zeng A.P."/>
            <person name="Brandt B.W."/>
            <person name="Cornell M.J."/>
            <person name="van den Hondel C.A."/>
            <person name="Visser J."/>
            <person name="Oliver S.G."/>
            <person name="Turner G."/>
        </authorList>
    </citation>
    <scope>GENOME REANNOTATION</scope>
    <source>
        <strain>FGSC A4 / ATCC 38163 / CBS 112.46 / NRRL 194 / M139</strain>
    </source>
</reference>
<comment type="sequence caution" evidence="2">
    <conflict type="erroneous gene model prediction">
        <sequence resource="EMBL-CDS" id="EAA63886"/>
    </conflict>
    <text>The predicted gene AN1985 has been split into 2 genes: AN10248 and AN10254.</text>
</comment>
<evidence type="ECO:0000255" key="1"/>
<evidence type="ECO:0000305" key="2"/>
<name>Y1985_EMENI</name>
<gene>
    <name type="ORF">AN10254</name>
</gene>
<keyword id="KW-0175">Coiled coil</keyword>
<keyword id="KW-1185">Reference proteome</keyword>
<proteinExistence type="predicted"/>
<organism>
    <name type="scientific">Emericella nidulans (strain FGSC A4 / ATCC 38163 / CBS 112.46 / NRRL 194 / M139)</name>
    <name type="common">Aspergillus nidulans</name>
    <dbReference type="NCBI Taxonomy" id="227321"/>
    <lineage>
        <taxon>Eukaryota</taxon>
        <taxon>Fungi</taxon>
        <taxon>Dikarya</taxon>
        <taxon>Ascomycota</taxon>
        <taxon>Pezizomycotina</taxon>
        <taxon>Eurotiomycetes</taxon>
        <taxon>Eurotiomycetidae</taxon>
        <taxon>Eurotiales</taxon>
        <taxon>Aspergillaceae</taxon>
        <taxon>Aspergillus</taxon>
        <taxon>Aspergillus subgen. Nidulantes</taxon>
    </lineage>
</organism>
<sequence length="352" mass="39580">MIPPCDPTILEHNPLFKRLHQHLTASLLNPDGSTRTTDAQPARREIIMELRGCRMRNAKKQIKKQMLRQLALDPDNELPDECREPLAIISLYLEASPNELDQIRDPRDGVDVDTLLASDFEKFYAKLPFIMPHFTRSLASALHDLRSLANAGNKAALSNTSTEGSRSRMQVRCRSKAARQDPLGPQLSERLQNLRHLQLSELAGGRTRMAGTAAEVLAMRAAILERTVTLLERTKHGAMARATKAKAEHLAAVARGLEGKLRVMRLDALAAIHTPEVNAALSHYFQHLRNARERLEERRRLVLDELKAYEDADSSTINGPAKPGPIVGFIRQYGNLIKQIEDIKSEIRRLQR</sequence>
<protein>
    <recommendedName>
        <fullName>Uncharacterized protein AN1985</fullName>
    </recommendedName>
</protein>